<accession>P0DUI2</accession>
<organism>
    <name type="scientific">Centruroides tecomanus</name>
    <name type="common">Scorpion</name>
    <name type="synonym">Centruroides limpidus tecomanus</name>
    <dbReference type="NCBI Taxonomy" id="1028682"/>
    <lineage>
        <taxon>Eukaryota</taxon>
        <taxon>Metazoa</taxon>
        <taxon>Ecdysozoa</taxon>
        <taxon>Arthropoda</taxon>
        <taxon>Chelicerata</taxon>
        <taxon>Arachnida</taxon>
        <taxon>Scorpiones</taxon>
        <taxon>Buthida</taxon>
        <taxon>Buthoidea</taxon>
        <taxon>Buthidae</taxon>
        <taxon>Centruroides</taxon>
    </lineage>
</organism>
<sequence>MNSLLMITACLVLIGTVWAKKDGYLVDKTGCKKTCYKLGENDFCNRECKWKHIGGSYGYCYGFGCYCEGMSDSTPTWPLPNKRCGKK</sequence>
<protein>
    <recommendedName>
        <fullName evidence="5">Beta-toxin Ct17</fullName>
    </recommendedName>
</protein>
<dbReference type="EMBL" id="JZ122281">
    <property type="status" value="NOT_ANNOTATED_CDS"/>
    <property type="molecule type" value="mRNA"/>
</dbReference>
<dbReference type="SMR" id="P0DUI2"/>
<dbReference type="GO" id="GO:0005576">
    <property type="term" value="C:extracellular region"/>
    <property type="evidence" value="ECO:0000314"/>
    <property type="project" value="UniProtKB"/>
</dbReference>
<dbReference type="GO" id="GO:0019871">
    <property type="term" value="F:sodium channel inhibitor activity"/>
    <property type="evidence" value="ECO:0007669"/>
    <property type="project" value="InterPro"/>
</dbReference>
<dbReference type="GO" id="GO:0090729">
    <property type="term" value="F:toxin activity"/>
    <property type="evidence" value="ECO:0007669"/>
    <property type="project" value="UniProtKB-KW"/>
</dbReference>
<dbReference type="GO" id="GO:0006952">
    <property type="term" value="P:defense response"/>
    <property type="evidence" value="ECO:0007669"/>
    <property type="project" value="InterPro"/>
</dbReference>
<dbReference type="CDD" id="cd23106">
    <property type="entry name" value="neurotoxins_LC_scorpion"/>
    <property type="match status" value="1"/>
</dbReference>
<dbReference type="FunFam" id="3.30.30.10:FF:000002">
    <property type="entry name" value="Alpha-like toxin BmK-M1"/>
    <property type="match status" value="1"/>
</dbReference>
<dbReference type="Gene3D" id="3.30.30.10">
    <property type="entry name" value="Knottin, scorpion toxin-like"/>
    <property type="match status" value="1"/>
</dbReference>
<dbReference type="InterPro" id="IPR044062">
    <property type="entry name" value="LCN-type_CS_alpha_beta_dom"/>
</dbReference>
<dbReference type="InterPro" id="IPR003614">
    <property type="entry name" value="Scorpion_toxin-like"/>
</dbReference>
<dbReference type="InterPro" id="IPR036574">
    <property type="entry name" value="Scorpion_toxin-like_sf"/>
</dbReference>
<dbReference type="InterPro" id="IPR018218">
    <property type="entry name" value="Scorpion_toxinL"/>
</dbReference>
<dbReference type="InterPro" id="IPR002061">
    <property type="entry name" value="Scorpion_toxinL/defensin"/>
</dbReference>
<dbReference type="Pfam" id="PF00537">
    <property type="entry name" value="Toxin_3"/>
    <property type="match status" value="1"/>
</dbReference>
<dbReference type="PRINTS" id="PR00285">
    <property type="entry name" value="SCORPNTOXIN"/>
</dbReference>
<dbReference type="SMART" id="SM00505">
    <property type="entry name" value="Knot1"/>
    <property type="match status" value="1"/>
</dbReference>
<dbReference type="SUPFAM" id="SSF57095">
    <property type="entry name" value="Scorpion toxin-like"/>
    <property type="match status" value="1"/>
</dbReference>
<dbReference type="PROSITE" id="PS51863">
    <property type="entry name" value="LCN_CSAB"/>
    <property type="match status" value="1"/>
</dbReference>
<evidence type="ECO:0000250" key="1">
    <source>
        <dbReference type="UniProtKB" id="P60266"/>
    </source>
</evidence>
<evidence type="ECO:0000255" key="2">
    <source>
        <dbReference type="PROSITE-ProRule" id="PRU01210"/>
    </source>
</evidence>
<evidence type="ECO:0000269" key="3">
    <source>
    </source>
</evidence>
<evidence type="ECO:0000269" key="4">
    <source>
    </source>
</evidence>
<evidence type="ECO:0000303" key="5">
    <source>
    </source>
</evidence>
<evidence type="ECO:0000305" key="6"/>
<evidence type="ECO:0000305" key="7">
    <source>
    </source>
</evidence>
<name>SCX17_CENTE</name>
<proteinExistence type="evidence at protein level"/>
<comment type="function">
    <text evidence="1 4">Beta toxins bind voltage-independently at site-4 of sodium channels (Nav) and shift the voltage of activation toward more negative potentials thereby affecting sodium channel activation and promoting spontaneous and repetitive firing (By similarity). Is possibly lethal to mice, freshwater shrimp and crickets (PubMed:27130039).</text>
</comment>
<comment type="subcellular location">
    <subcellularLocation>
        <location evidence="3">Secreted</location>
    </subcellularLocation>
</comment>
<comment type="tissue specificity">
    <text evidence="7">Expressed by the venom gland.</text>
</comment>
<comment type="domain">
    <text evidence="6">Has the structural arrangement of an alpha-helix connected to antiparallel beta-sheets by disulfide bonds (CS-alpha/beta).</text>
</comment>
<comment type="mass spectrometry">
    <text>Average mass.</text>
</comment>
<comment type="similarity">
    <text evidence="6">Belongs to the long (4 C-C) scorpion toxin superfamily. Sodium channel inhibitor family. Beta subfamily.</text>
</comment>
<reference key="1">
    <citation type="journal article" date="2013" name="PLoS ONE">
        <title>Mass fingerprinting of the venom and transcriptome of venom gland of scorpion Centruroides tecomanus.</title>
        <authorList>
            <person name="Valdez-Velazquez L.L."/>
            <person name="Quintero-Hernandez V."/>
            <person name="Romero-Gutierrez M.T."/>
            <person name="Coronas F.I."/>
            <person name="Possani L.D."/>
        </authorList>
    </citation>
    <scope>NUCLEOTIDE SEQUENCE [MRNA]</scope>
    <scope>PROTEIN SEQUENCE OF 20-49</scope>
    <scope>PROBABLE AMIDATION AT CYS-84</scope>
    <scope>MASS SPECTROMETRY</scope>
    <scope>SUBCELLULAR LOCATION</scope>
    <source>
        <tissue>Venom</tissue>
        <tissue>Venom gland</tissue>
    </source>
</reference>
<reference key="2">
    <citation type="journal article" date="2016" name="Toxicon">
        <title>Comprehensive analysis of venom from the scorpion Centruroides tecomanus reveals compounds with antimicrobial, cytotoxic, and insecticidal activities.</title>
        <authorList>
            <person name="Valdez-Velazquez L.L."/>
            <person name="Romero-Gutierrez M.T."/>
            <person name="Delgado-Enciso I."/>
            <person name="Dobrovinskaya O."/>
            <person name="Melnikov V."/>
            <person name="Quintero-Hernandez V."/>
            <person name="Ceballos-Magana S.G."/>
            <person name="Gaitan-Hinojosa M.A."/>
            <person name="Coronas F.I."/>
            <person name="Puebla-Perez A.M."/>
            <person name="Zamudio F."/>
            <person name="De la Cruz-Garcia I."/>
            <person name="Vazquez-Vuelvas O.F."/>
            <person name="Soriano-Hernandez A.D."/>
            <person name="Possani L.D."/>
        </authorList>
    </citation>
    <scope>FUNCTION</scope>
    <source>
        <tissue>Venom</tissue>
    </source>
</reference>
<keyword id="KW-0027">Amidation</keyword>
<keyword id="KW-0903">Direct protein sequencing</keyword>
<keyword id="KW-1015">Disulfide bond</keyword>
<keyword id="KW-0872">Ion channel impairing toxin</keyword>
<keyword id="KW-0528">Neurotoxin</keyword>
<keyword id="KW-0964">Secreted</keyword>
<keyword id="KW-0732">Signal</keyword>
<keyword id="KW-0800">Toxin</keyword>
<keyword id="KW-0738">Voltage-gated sodium channel impairing toxin</keyword>
<feature type="signal peptide" evidence="7">
    <location>
        <begin position="1"/>
        <end position="19"/>
    </location>
</feature>
<feature type="chain" id="PRO_0000452429" description="Beta-toxin Ct17" evidence="7">
    <location>
        <begin position="20"/>
        <end position="84"/>
    </location>
</feature>
<feature type="domain" description="LCN-type CS-alpha/beta" evidence="2">
    <location>
        <begin position="20"/>
        <end position="85"/>
    </location>
</feature>
<feature type="modified residue" description="Cysteine amide" evidence="7">
    <location>
        <position position="84"/>
    </location>
</feature>
<feature type="disulfide bond" evidence="2">
    <location>
        <begin position="31"/>
        <end position="84"/>
    </location>
</feature>
<feature type="disulfide bond" evidence="2">
    <location>
        <begin position="35"/>
        <end position="60"/>
    </location>
</feature>
<feature type="disulfide bond" evidence="2">
    <location>
        <begin position="44"/>
        <end position="65"/>
    </location>
</feature>
<feature type="disulfide bond" evidence="2">
    <location>
        <begin position="48"/>
        <end position="67"/>
    </location>
</feature>